<reference key="1">
    <citation type="journal article" date="2011" name="BMC Plant Biol.">
        <title>Identification and characterisation of seed storage protein transcripts from Lupinus angustifolius.</title>
        <authorList>
            <person name="Foley R.C."/>
            <person name="Gao L.-L."/>
            <person name="Spriggs A."/>
            <person name="Soo L.Y.C."/>
            <person name="Goggin D.E."/>
            <person name="Smith P.M.C."/>
            <person name="Atkins C.A."/>
            <person name="Singh K.B."/>
        </authorList>
    </citation>
    <scope>NUCLEOTIDE SEQUENCE [MRNA]</scope>
    <scope>FUNCTION</scope>
    <scope>DEVELOPMENTAL STAGE</scope>
    <source>
        <strain>cv. Tanjil</strain>
        <tissue>Seed</tissue>
    </source>
</reference>
<reference key="2">
    <citation type="journal article" date="2008" name="J. Agric. Food Chem.">
        <title>Proteomic analysis of lupin seed proteins to identify conglutin Beta as an allergen, Lup an 1.</title>
        <authorList>
            <person name="Goggin D.E."/>
            <person name="Mir G."/>
            <person name="Smith W.B."/>
            <person name="Stuckey M."/>
            <person name="Smith P.M."/>
        </authorList>
    </citation>
    <scope>ALLERGEN</scope>
</reference>
<reference key="3">
    <citation type="journal article" date="2012" name="J. Agric. Food Chem.">
        <title>Release of flavonoids from lupin globulin proteins during digestion in a model system.</title>
        <authorList>
            <person name="Czubinski J."/>
            <person name="Dwiecki K."/>
            <person name="Siger A."/>
            <person name="Kachlicki P."/>
            <person name="Neunert G."/>
            <person name="Lampart-Szczapa E."/>
            <person name="Nogala-Kalucka M."/>
        </authorList>
    </citation>
    <scope>SUBUNIT</scope>
    <source>
        <strain>cv. Zeus</strain>
    </source>
</reference>
<reference key="4">
    <citation type="book" date="2015" name="Bioinformatics and Biomedical Engineering, LNCS 9043">
        <title>Lupin allergy: Uncovering structural features and epitopes of b-conglutin proteins in Lupinus angustifolius L. with a focus on cross-allergenic reactivity to peanut and other legumes.</title>
        <editorList>
            <person name="Ortuno F."/>
            <person name="Rojas I."/>
        </editorList>
        <authorList>
            <person name="Jimenez-Lopez J.C."/>
            <person name="Lima-Cabello E."/>
            <person name="Melser S."/>
            <person name="Foley R.C."/>
            <person name="Singh K.B."/>
        </authorList>
    </citation>
    <scope>3D-STRUCTURE MODELING</scope>
</reference>
<accession>F5B8W5</accession>
<protein>
    <recommendedName>
        <fullName evidence="7">Conglutin beta 7</fullName>
    </recommendedName>
    <allergenName evidence="6">Lup an 1</allergenName>
</protein>
<comment type="function">
    <text evidence="5">Seed storage protein. Accumulates during seed development and is hydrolyzed after germination to provide a carbon and nitrogen source for the developing seedling.</text>
</comment>
<comment type="subunit">
    <text evidence="9">Component of globulins complexes which accumulate in seeds.</text>
</comment>
<comment type="developmental stage">
    <text evidence="5">Increased expression during seed filling, with a maximum between 33 and 38 days after anthesis.</text>
</comment>
<comment type="allergen">
    <text evidence="4">Causes an allergic reaction in human. Lup an 1 is the major lupin allergen.</text>
</comment>
<comment type="miscellaneous">
    <text evidence="10">The variability of the residues taking part of IgE-binding epitopes might be responsible of the difference in cross-reactivity among legumes.</text>
</comment>
<comment type="similarity">
    <text evidence="8">Belongs to the 7S seed storage protein family.</text>
</comment>
<organism>
    <name type="scientific">Lupinus angustifolius</name>
    <name type="common">Narrow-leaved blue lupine</name>
    <dbReference type="NCBI Taxonomy" id="3871"/>
    <lineage>
        <taxon>Eukaryota</taxon>
        <taxon>Viridiplantae</taxon>
        <taxon>Streptophyta</taxon>
        <taxon>Embryophyta</taxon>
        <taxon>Tracheophyta</taxon>
        <taxon>Spermatophyta</taxon>
        <taxon>Magnoliopsida</taxon>
        <taxon>eudicotyledons</taxon>
        <taxon>Gunneridae</taxon>
        <taxon>Pentapetalae</taxon>
        <taxon>rosids</taxon>
        <taxon>fabids</taxon>
        <taxon>Fabales</taxon>
        <taxon>Fabaceae</taxon>
        <taxon>Papilionoideae</taxon>
        <taxon>50 kb inversion clade</taxon>
        <taxon>genistoids sensu lato</taxon>
        <taxon>core genistoids</taxon>
        <taxon>Genisteae</taxon>
        <taxon>Lupinus</taxon>
    </lineage>
</organism>
<keyword id="KW-0020">Allergen</keyword>
<keyword id="KW-0325">Glycoprotein</keyword>
<keyword id="KW-0708">Seed storage protein</keyword>
<keyword id="KW-0732">Signal</keyword>
<keyword id="KW-0758">Storage protein</keyword>
<gene>
    <name evidence="7" type="primary">BETA7</name>
</gene>
<sequence>MARMRVRFPTLVLLLGILFLMAVSIGIAYGEKDVIKNHERPGEREHEERDPRQQPRPRKQEEQEREHRREEEHDRDPSRGRRESEERQEEERERRREPCREREQEQQPQHGRREEEEEEEEWQPRRLRPQSRKEEREQEQGSSSSSRKQSGYERRQYHERREQRDEKEKEQDSRSDSRRQRNPYHFSSERFQTRYRNRNGQIRVLERFDQRTNRLENLQNYRIVEFQSNPNTLILPKHSDADYILVVLNGRATITIVNPDKRQAYNLEYGDALRVPAGTTSYILNPDDNQNLRVVKLAIPINNPSNFYDFYPSSTKDQQSYFSGFSKNTLEATFNTRYEEIQRILLGNEDEQEDEEQRRGQEQSYQDEGVIVRVSKEQIQELRKHAQSSSRKGKPSESGPFNLRSNESIYSNKFGNFYEITPERNPQVQDLDISLTFTEINEGALLLPHYNSKAIFIVVVDEGEGNYELVGIRDQQRQQDEQEEEEEEVRRYSARLSEGDIFVIPAGYPISVNASSNLRLLGFGINANENQRNFLAGSEDNVISQLDREVKELTFPGSAQDVERLIKNQQQSYFANAQPQQKQQREKEGRRGRRSLISSILSTLY</sequence>
<evidence type="ECO:0000255" key="1"/>
<evidence type="ECO:0000255" key="2">
    <source>
        <dbReference type="PROSITE-ProRule" id="PRU00498"/>
    </source>
</evidence>
<evidence type="ECO:0000256" key="3">
    <source>
        <dbReference type="SAM" id="MobiDB-lite"/>
    </source>
</evidence>
<evidence type="ECO:0000269" key="4">
    <source>
    </source>
</evidence>
<evidence type="ECO:0000269" key="5">
    <source>
    </source>
</evidence>
<evidence type="ECO:0000303" key="6">
    <source>
    </source>
</evidence>
<evidence type="ECO:0000303" key="7">
    <source>
    </source>
</evidence>
<evidence type="ECO:0000305" key="8"/>
<evidence type="ECO:0000305" key="9">
    <source>
    </source>
</evidence>
<evidence type="ECO:0000305" key="10">
    <source ref="4"/>
</evidence>
<dbReference type="EMBL" id="HQ670415">
    <property type="protein sequence ID" value="AEB33718.1"/>
    <property type="molecule type" value="mRNA"/>
</dbReference>
<dbReference type="SMR" id="F5B8W5"/>
<dbReference type="Allergome" id="4015">
    <property type="allergen name" value="Lup an 1"/>
</dbReference>
<dbReference type="GlyCosmos" id="F5B8W5">
    <property type="glycosylation" value="2 sites, No reported glycans"/>
</dbReference>
<dbReference type="GO" id="GO:0045735">
    <property type="term" value="F:nutrient reservoir activity"/>
    <property type="evidence" value="ECO:0007669"/>
    <property type="project" value="UniProtKB-KW"/>
</dbReference>
<dbReference type="CDD" id="cd02245">
    <property type="entry name" value="cupin_7S_vicilin-like_C"/>
    <property type="match status" value="1"/>
</dbReference>
<dbReference type="CDD" id="cd02244">
    <property type="entry name" value="cupin_7S_vicilin-like_N"/>
    <property type="match status" value="1"/>
</dbReference>
<dbReference type="Gene3D" id="2.60.120.10">
    <property type="entry name" value="Jelly Rolls"/>
    <property type="match status" value="2"/>
</dbReference>
<dbReference type="InterPro" id="IPR006045">
    <property type="entry name" value="Cupin_1"/>
</dbReference>
<dbReference type="InterPro" id="IPR014710">
    <property type="entry name" value="RmlC-like_jellyroll"/>
</dbReference>
<dbReference type="InterPro" id="IPR011051">
    <property type="entry name" value="RmlC_Cupin_sf"/>
</dbReference>
<dbReference type="InterPro" id="IPR050253">
    <property type="entry name" value="Seed_Storage-Functional"/>
</dbReference>
<dbReference type="PANTHER" id="PTHR31189">
    <property type="entry name" value="OS03G0336100 PROTEIN-RELATED"/>
    <property type="match status" value="1"/>
</dbReference>
<dbReference type="PANTHER" id="PTHR31189:SF41">
    <property type="entry name" value="VICILIN C72"/>
    <property type="match status" value="1"/>
</dbReference>
<dbReference type="Pfam" id="PF00190">
    <property type="entry name" value="Cupin_1"/>
    <property type="match status" value="2"/>
</dbReference>
<dbReference type="SMART" id="SM00835">
    <property type="entry name" value="Cupin_1"/>
    <property type="match status" value="2"/>
</dbReference>
<dbReference type="SUPFAM" id="SSF51182">
    <property type="entry name" value="RmlC-like cupins"/>
    <property type="match status" value="2"/>
</dbReference>
<feature type="signal peptide" evidence="1">
    <location>
        <begin position="1"/>
        <end position="30"/>
    </location>
</feature>
<feature type="chain" id="PRO_5003321847" description="Conglutin beta 7" evidence="1">
    <location>
        <begin position="31"/>
        <end position="605"/>
    </location>
</feature>
<feature type="domain" description="Cupin type-1 1" evidence="1">
    <location>
        <begin position="184"/>
        <end position="342"/>
    </location>
</feature>
<feature type="domain" description="Cupin type-1 2" evidence="1">
    <location>
        <begin position="401"/>
        <end position="563"/>
    </location>
</feature>
<feature type="region of interest" description="Disordered" evidence="3">
    <location>
        <begin position="37"/>
        <end position="193"/>
    </location>
</feature>
<feature type="region of interest" description="Disordered" evidence="3">
    <location>
        <begin position="346"/>
        <end position="367"/>
    </location>
</feature>
<feature type="region of interest" description="Disordered" evidence="3">
    <location>
        <begin position="382"/>
        <end position="405"/>
    </location>
</feature>
<feature type="region of interest" description="Disordered" evidence="3">
    <location>
        <begin position="574"/>
        <end position="593"/>
    </location>
</feature>
<feature type="compositionally biased region" description="Basic and acidic residues" evidence="3">
    <location>
        <begin position="37"/>
        <end position="105"/>
    </location>
</feature>
<feature type="compositionally biased region" description="Low complexity" evidence="3">
    <location>
        <begin position="140"/>
        <end position="149"/>
    </location>
</feature>
<feature type="compositionally biased region" description="Basic and acidic residues" evidence="3">
    <location>
        <begin position="150"/>
        <end position="179"/>
    </location>
</feature>
<feature type="glycosylation site" description="N-linked (GlcNAc...) asparagine" evidence="2">
    <location>
        <position position="406"/>
    </location>
</feature>
<feature type="glycosylation site" description="N-linked (GlcNAc...) asparagine" evidence="2">
    <location>
        <position position="513"/>
    </location>
</feature>
<proteinExistence type="evidence at protein level"/>
<name>CONB7_LUPAN</name>